<protein>
    <recommendedName>
        <fullName>Uncharacterized HTH-type transcriptional regulator MJ1398</fullName>
    </recommendedName>
</protein>
<name>Y1398_METJA</name>
<gene>
    <name type="ordered locus">MJ1398</name>
</gene>
<keyword id="KW-0238">DNA-binding</keyword>
<keyword id="KW-1185">Reference proteome</keyword>
<keyword id="KW-0804">Transcription</keyword>
<keyword id="KW-0805">Transcription regulation</keyword>
<proteinExistence type="predicted"/>
<feature type="chain" id="PRO_0000160635" description="Uncharacterized HTH-type transcriptional regulator MJ1398">
    <location>
        <begin position="1"/>
        <end position="391"/>
    </location>
</feature>
<feature type="domain" description="HTH arsR-type" evidence="1">
    <location>
        <begin position="235"/>
        <end position="330"/>
    </location>
</feature>
<reference key="1">
    <citation type="journal article" date="1996" name="Science">
        <title>Complete genome sequence of the methanogenic archaeon, Methanococcus jannaschii.</title>
        <authorList>
            <person name="Bult C.J."/>
            <person name="White O."/>
            <person name="Olsen G.J."/>
            <person name="Zhou L."/>
            <person name="Fleischmann R.D."/>
            <person name="Sutton G.G."/>
            <person name="Blake J.A."/>
            <person name="FitzGerald L.M."/>
            <person name="Clayton R.A."/>
            <person name="Gocayne J.D."/>
            <person name="Kerlavage A.R."/>
            <person name="Dougherty B.A."/>
            <person name="Tomb J.-F."/>
            <person name="Adams M.D."/>
            <person name="Reich C.I."/>
            <person name="Overbeek R."/>
            <person name="Kirkness E.F."/>
            <person name="Weinstock K.G."/>
            <person name="Merrick J.M."/>
            <person name="Glodek A."/>
            <person name="Scott J.L."/>
            <person name="Geoghagen N.S.M."/>
            <person name="Weidman J.F."/>
            <person name="Fuhrmann J.L."/>
            <person name="Nguyen D."/>
            <person name="Utterback T.R."/>
            <person name="Kelley J.M."/>
            <person name="Peterson J.D."/>
            <person name="Sadow P.W."/>
            <person name="Hanna M.C."/>
            <person name="Cotton M.D."/>
            <person name="Roberts K.M."/>
            <person name="Hurst M.A."/>
            <person name="Kaine B.P."/>
            <person name="Borodovsky M."/>
            <person name="Klenk H.-P."/>
            <person name="Fraser C.M."/>
            <person name="Smith H.O."/>
            <person name="Woese C.R."/>
            <person name="Venter J.C."/>
        </authorList>
    </citation>
    <scope>NUCLEOTIDE SEQUENCE [LARGE SCALE GENOMIC DNA]</scope>
    <source>
        <strain>ATCC 43067 / DSM 2661 / JAL-1 / JCM 10045 / NBRC 100440</strain>
    </source>
</reference>
<evidence type="ECO:0000255" key="1">
    <source>
        <dbReference type="PROSITE-ProRule" id="PRU00340"/>
    </source>
</evidence>
<sequence length="391" mass="45530">MKKDTLLLIILILFCIVHVYGIYVHIYGINVSLENVSQYLYNTTVYLSYENGTPCFYIGEKKEFVIIPPYIKVDRDIAPLIKKLRFKIENKSYNLIITKKNVNTNKMAIIFTSINGSREVNGNKTIIWIKDPLKLKQSEVEALYELPEKGEVIARYKDGKPAAIKINNKIYVGFKPDEDVLANLIYIHIVKKTSNPLPYILFTVFLTLASLMLTFQETLKKKFLELISALASVKVFILSRINLLDEEKVLLNDTRREIYNYILDNPGCHLRELSKNLNKPVSTLTWHLRILEKANLIKSKKFGNRLIYYPADMDMRDLPLLYLKNETQKSIFEYLLKSPAHLRKIAKDLNLNVETVRYNLKKLENLGIVKSKEEGNRIVYYINESILKFHK</sequence>
<dbReference type="EMBL" id="L77117">
    <property type="protein sequence ID" value="AAB99407.1"/>
    <property type="molecule type" value="Genomic_DNA"/>
</dbReference>
<dbReference type="PIR" id="E64474">
    <property type="entry name" value="E64474"/>
</dbReference>
<dbReference type="RefSeq" id="WP_010870915.1">
    <property type="nucleotide sequence ID" value="NC_000909.1"/>
</dbReference>
<dbReference type="SMR" id="Q58793"/>
<dbReference type="FunCoup" id="Q58793">
    <property type="interactions" value="3"/>
</dbReference>
<dbReference type="STRING" id="243232.MJ_1398"/>
<dbReference type="PaxDb" id="243232-MJ_1398"/>
<dbReference type="EnsemblBacteria" id="AAB99407">
    <property type="protein sequence ID" value="AAB99407"/>
    <property type="gene ID" value="MJ_1398"/>
</dbReference>
<dbReference type="GeneID" id="1452301"/>
<dbReference type="KEGG" id="mja:MJ_1398"/>
<dbReference type="eggNOG" id="arCOG02611">
    <property type="taxonomic scope" value="Archaea"/>
</dbReference>
<dbReference type="HOGENOM" id="CLU_718896_0_0_2"/>
<dbReference type="InParanoid" id="Q58793"/>
<dbReference type="OrthoDB" id="28610at2157"/>
<dbReference type="Proteomes" id="UP000000805">
    <property type="component" value="Chromosome"/>
</dbReference>
<dbReference type="GO" id="GO:0003677">
    <property type="term" value="F:DNA binding"/>
    <property type="evidence" value="ECO:0007669"/>
    <property type="project" value="UniProtKB-KW"/>
</dbReference>
<dbReference type="GO" id="GO:0003700">
    <property type="term" value="F:DNA-binding transcription factor activity"/>
    <property type="evidence" value="ECO:0007669"/>
    <property type="project" value="InterPro"/>
</dbReference>
<dbReference type="CDD" id="cd00090">
    <property type="entry name" value="HTH_ARSR"/>
    <property type="match status" value="2"/>
</dbReference>
<dbReference type="Gene3D" id="1.10.10.10">
    <property type="entry name" value="Winged helix-like DNA-binding domain superfamily/Winged helix DNA-binding domain"/>
    <property type="match status" value="2"/>
</dbReference>
<dbReference type="InterPro" id="IPR011991">
    <property type="entry name" value="ArsR-like_HTH"/>
</dbReference>
<dbReference type="InterPro" id="IPR001845">
    <property type="entry name" value="HTH_ArsR_DNA-bd_dom"/>
</dbReference>
<dbReference type="InterPro" id="IPR036388">
    <property type="entry name" value="WH-like_DNA-bd_sf"/>
</dbReference>
<dbReference type="InterPro" id="IPR036390">
    <property type="entry name" value="WH_DNA-bd_sf"/>
</dbReference>
<dbReference type="PANTHER" id="PTHR36216:SF1">
    <property type="entry name" value="HTH ARSR-TYPE DOMAIN-CONTAINING PROTEIN"/>
    <property type="match status" value="1"/>
</dbReference>
<dbReference type="PANTHER" id="PTHR36216">
    <property type="entry name" value="TRANSCRIPTIONAL REGULATOR, TRMB"/>
    <property type="match status" value="1"/>
</dbReference>
<dbReference type="Pfam" id="PF13412">
    <property type="entry name" value="HTH_24"/>
    <property type="match status" value="1"/>
</dbReference>
<dbReference type="Pfam" id="PF01022">
    <property type="entry name" value="HTH_5"/>
    <property type="match status" value="1"/>
</dbReference>
<dbReference type="SMART" id="SM00418">
    <property type="entry name" value="HTH_ARSR"/>
    <property type="match status" value="2"/>
</dbReference>
<dbReference type="SUPFAM" id="SSF46785">
    <property type="entry name" value="Winged helix' DNA-binding domain"/>
    <property type="match status" value="2"/>
</dbReference>
<dbReference type="PROSITE" id="PS50987">
    <property type="entry name" value="HTH_ARSR_2"/>
    <property type="match status" value="1"/>
</dbReference>
<accession>Q58793</accession>
<organism>
    <name type="scientific">Methanocaldococcus jannaschii (strain ATCC 43067 / DSM 2661 / JAL-1 / JCM 10045 / NBRC 100440)</name>
    <name type="common">Methanococcus jannaschii</name>
    <dbReference type="NCBI Taxonomy" id="243232"/>
    <lineage>
        <taxon>Archaea</taxon>
        <taxon>Methanobacteriati</taxon>
        <taxon>Methanobacteriota</taxon>
        <taxon>Methanomada group</taxon>
        <taxon>Methanococci</taxon>
        <taxon>Methanococcales</taxon>
        <taxon>Methanocaldococcaceae</taxon>
        <taxon>Methanocaldococcus</taxon>
    </lineage>
</organism>